<organism>
    <name type="scientific">Streptococcus pneumoniae (strain JJA)</name>
    <dbReference type="NCBI Taxonomy" id="488222"/>
    <lineage>
        <taxon>Bacteria</taxon>
        <taxon>Bacillati</taxon>
        <taxon>Bacillota</taxon>
        <taxon>Bacilli</taxon>
        <taxon>Lactobacillales</taxon>
        <taxon>Streptococcaceae</taxon>
        <taxon>Streptococcus</taxon>
    </lineage>
</organism>
<protein>
    <recommendedName>
        <fullName evidence="1">Large ribosomal subunit protein bL34</fullName>
    </recommendedName>
    <alternativeName>
        <fullName evidence="3">50S ribosomal protein L34</fullName>
    </alternativeName>
</protein>
<keyword id="KW-0687">Ribonucleoprotein</keyword>
<keyword id="KW-0689">Ribosomal protein</keyword>
<gene>
    <name evidence="1" type="primary">rpmH</name>
    <name type="ordered locus">SPJ_1986</name>
</gene>
<proteinExistence type="inferred from homology"/>
<comment type="similarity">
    <text evidence="1">Belongs to the bacterial ribosomal protein bL34 family.</text>
</comment>
<evidence type="ECO:0000255" key="1">
    <source>
        <dbReference type="HAMAP-Rule" id="MF_00391"/>
    </source>
</evidence>
<evidence type="ECO:0000256" key="2">
    <source>
        <dbReference type="SAM" id="MobiDB-lite"/>
    </source>
</evidence>
<evidence type="ECO:0000305" key="3"/>
<sequence>MKRTYQPSKLRRARKHGFRNRMSTKNGRRVLAARRRKGRKVLAA</sequence>
<accession>C1CGS4</accession>
<dbReference type="EMBL" id="CP000919">
    <property type="protein sequence ID" value="ACO18428.1"/>
    <property type="molecule type" value="Genomic_DNA"/>
</dbReference>
<dbReference type="RefSeq" id="WP_000831905.1">
    <property type="nucleotide sequence ID" value="NC_012466.1"/>
</dbReference>
<dbReference type="SMR" id="C1CGS4"/>
<dbReference type="GeneID" id="93738550"/>
<dbReference type="KEGG" id="sjj:SPJ_1986"/>
<dbReference type="HOGENOM" id="CLU_129938_2_0_9"/>
<dbReference type="Proteomes" id="UP000002206">
    <property type="component" value="Chromosome"/>
</dbReference>
<dbReference type="GO" id="GO:1990904">
    <property type="term" value="C:ribonucleoprotein complex"/>
    <property type="evidence" value="ECO:0007669"/>
    <property type="project" value="UniProtKB-KW"/>
</dbReference>
<dbReference type="GO" id="GO:0005840">
    <property type="term" value="C:ribosome"/>
    <property type="evidence" value="ECO:0007669"/>
    <property type="project" value="UniProtKB-KW"/>
</dbReference>
<dbReference type="GO" id="GO:0003735">
    <property type="term" value="F:structural constituent of ribosome"/>
    <property type="evidence" value="ECO:0007669"/>
    <property type="project" value="InterPro"/>
</dbReference>
<dbReference type="GO" id="GO:0006412">
    <property type="term" value="P:translation"/>
    <property type="evidence" value="ECO:0007669"/>
    <property type="project" value="UniProtKB-UniRule"/>
</dbReference>
<dbReference type="FunFam" id="1.10.287.3980:FF:000001">
    <property type="entry name" value="Mitochondrial ribosomal protein L34"/>
    <property type="match status" value="1"/>
</dbReference>
<dbReference type="Gene3D" id="1.10.287.3980">
    <property type="match status" value="1"/>
</dbReference>
<dbReference type="HAMAP" id="MF_00391">
    <property type="entry name" value="Ribosomal_bL34"/>
    <property type="match status" value="1"/>
</dbReference>
<dbReference type="InterPro" id="IPR000271">
    <property type="entry name" value="Ribosomal_bL34"/>
</dbReference>
<dbReference type="InterPro" id="IPR020939">
    <property type="entry name" value="Ribosomal_bL34_CS"/>
</dbReference>
<dbReference type="NCBIfam" id="TIGR01030">
    <property type="entry name" value="rpmH_bact"/>
    <property type="match status" value="1"/>
</dbReference>
<dbReference type="PANTHER" id="PTHR14503:SF4">
    <property type="entry name" value="LARGE RIBOSOMAL SUBUNIT PROTEIN BL34M"/>
    <property type="match status" value="1"/>
</dbReference>
<dbReference type="PANTHER" id="PTHR14503">
    <property type="entry name" value="MITOCHONDRIAL RIBOSOMAL PROTEIN 34 FAMILY MEMBER"/>
    <property type="match status" value="1"/>
</dbReference>
<dbReference type="Pfam" id="PF00468">
    <property type="entry name" value="Ribosomal_L34"/>
    <property type="match status" value="1"/>
</dbReference>
<dbReference type="PROSITE" id="PS00784">
    <property type="entry name" value="RIBOSOMAL_L34"/>
    <property type="match status" value="1"/>
</dbReference>
<feature type="chain" id="PRO_1000196121" description="Large ribosomal subunit protein bL34">
    <location>
        <begin position="1"/>
        <end position="44"/>
    </location>
</feature>
<feature type="region of interest" description="Disordered" evidence="2">
    <location>
        <begin position="1"/>
        <end position="44"/>
    </location>
</feature>
<feature type="compositionally biased region" description="Basic residues" evidence="2">
    <location>
        <begin position="1"/>
        <end position="19"/>
    </location>
</feature>
<feature type="compositionally biased region" description="Basic residues" evidence="2">
    <location>
        <begin position="26"/>
        <end position="44"/>
    </location>
</feature>
<reference key="1">
    <citation type="journal article" date="2010" name="Genome Biol.">
        <title>Structure and dynamics of the pan-genome of Streptococcus pneumoniae and closely related species.</title>
        <authorList>
            <person name="Donati C."/>
            <person name="Hiller N.L."/>
            <person name="Tettelin H."/>
            <person name="Muzzi A."/>
            <person name="Croucher N.J."/>
            <person name="Angiuoli S.V."/>
            <person name="Oggioni M."/>
            <person name="Dunning Hotopp J.C."/>
            <person name="Hu F.Z."/>
            <person name="Riley D.R."/>
            <person name="Covacci A."/>
            <person name="Mitchell T.J."/>
            <person name="Bentley S.D."/>
            <person name="Kilian M."/>
            <person name="Ehrlich G.D."/>
            <person name="Rappuoli R."/>
            <person name="Moxon E.R."/>
            <person name="Masignani V."/>
        </authorList>
    </citation>
    <scope>NUCLEOTIDE SEQUENCE [LARGE SCALE GENOMIC DNA]</scope>
    <source>
        <strain>JJA</strain>
    </source>
</reference>
<name>RL34_STRZJ</name>